<feature type="chain" id="PRO_1000091959" description="DNA-directed RNA polymerase subunit alpha">
    <location>
        <begin position="1"/>
        <end position="327"/>
    </location>
</feature>
<feature type="region of interest" description="Alpha N-terminal domain (alpha-NTD)" evidence="1">
    <location>
        <begin position="1"/>
        <end position="231"/>
    </location>
</feature>
<feature type="region of interest" description="Alpha C-terminal domain (alpha-CTD)" evidence="1">
    <location>
        <begin position="252"/>
        <end position="327"/>
    </location>
</feature>
<name>RPOA_PELPB</name>
<accession>B4SBX4</accession>
<gene>
    <name evidence="1" type="primary">rpoA</name>
    <name type="ordered locus">Ppha_0316</name>
</gene>
<organism>
    <name type="scientific">Pelodictyon phaeoclathratiforme (strain DSM 5477 / BU-1)</name>
    <dbReference type="NCBI Taxonomy" id="324925"/>
    <lineage>
        <taxon>Bacteria</taxon>
        <taxon>Pseudomonadati</taxon>
        <taxon>Chlorobiota</taxon>
        <taxon>Chlorobiia</taxon>
        <taxon>Chlorobiales</taxon>
        <taxon>Chlorobiaceae</taxon>
        <taxon>Chlorobium/Pelodictyon group</taxon>
        <taxon>Pelodictyon</taxon>
    </lineage>
</organism>
<protein>
    <recommendedName>
        <fullName evidence="1">DNA-directed RNA polymerase subunit alpha</fullName>
        <shortName evidence="1">RNAP subunit alpha</shortName>
        <ecNumber evidence="1">2.7.7.6</ecNumber>
    </recommendedName>
    <alternativeName>
        <fullName evidence="1">RNA polymerase subunit alpha</fullName>
    </alternativeName>
    <alternativeName>
        <fullName evidence="1">Transcriptase subunit alpha</fullName>
    </alternativeName>
</protein>
<comment type="function">
    <text evidence="1">DNA-dependent RNA polymerase catalyzes the transcription of DNA into RNA using the four ribonucleoside triphosphates as substrates.</text>
</comment>
<comment type="catalytic activity">
    <reaction evidence="1">
        <text>RNA(n) + a ribonucleoside 5'-triphosphate = RNA(n+1) + diphosphate</text>
        <dbReference type="Rhea" id="RHEA:21248"/>
        <dbReference type="Rhea" id="RHEA-COMP:14527"/>
        <dbReference type="Rhea" id="RHEA-COMP:17342"/>
        <dbReference type="ChEBI" id="CHEBI:33019"/>
        <dbReference type="ChEBI" id="CHEBI:61557"/>
        <dbReference type="ChEBI" id="CHEBI:140395"/>
        <dbReference type="EC" id="2.7.7.6"/>
    </reaction>
</comment>
<comment type="subunit">
    <text evidence="1">Homodimer. The RNAP catalytic core consists of 2 alpha, 1 beta, 1 beta' and 1 omega subunit. When a sigma factor is associated with the core the holoenzyme is formed, which can initiate transcription.</text>
</comment>
<comment type="domain">
    <text evidence="1">The N-terminal domain is essential for RNAP assembly and basal transcription, whereas the C-terminal domain is involved in interaction with transcriptional regulators and with upstream promoter elements.</text>
</comment>
<comment type="similarity">
    <text evidence="1">Belongs to the RNA polymerase alpha chain family.</text>
</comment>
<sequence length="327" mass="37046">MIYQMQMPAKIEVDESSHTDCFGRFIAQPLERGYGVTLGNVMRRVLLASLPGTAITGIKIDGVFHEFAAIDGVREDVPEIVLNLKKVRFKSTCKRNCKTSLTLVGPMDFTAGDIIAQEGEFEVLNKDMHVATINAGATVKIDLYIGRGRGYMPAEENRPEGMPIGYIAVDAIYTPIRNVKFTVENTRVGQRTDYEKMILDVETDGSVSPDDSISLAGKIITDHVTFFANFSPTEEEFTEEEFKQQDDEFETMRRLFHTKIEDLDLSVRSHNCLRLAEIDTIGELVSHKEDELLNYKNFGKKSLTELKEQLEKFDLKFGMDITKYQMK</sequence>
<keyword id="KW-0240">DNA-directed RNA polymerase</keyword>
<keyword id="KW-0548">Nucleotidyltransferase</keyword>
<keyword id="KW-1185">Reference proteome</keyword>
<keyword id="KW-0804">Transcription</keyword>
<keyword id="KW-0808">Transferase</keyword>
<evidence type="ECO:0000255" key="1">
    <source>
        <dbReference type="HAMAP-Rule" id="MF_00059"/>
    </source>
</evidence>
<dbReference type="EC" id="2.7.7.6" evidence="1"/>
<dbReference type="EMBL" id="CP001110">
    <property type="protein sequence ID" value="ACF42649.1"/>
    <property type="molecule type" value="Genomic_DNA"/>
</dbReference>
<dbReference type="RefSeq" id="WP_012507144.1">
    <property type="nucleotide sequence ID" value="NC_011060.1"/>
</dbReference>
<dbReference type="SMR" id="B4SBX4"/>
<dbReference type="STRING" id="324925.Ppha_0316"/>
<dbReference type="KEGG" id="pph:Ppha_0316"/>
<dbReference type="eggNOG" id="COG0202">
    <property type="taxonomic scope" value="Bacteria"/>
</dbReference>
<dbReference type="HOGENOM" id="CLU_053084_0_1_10"/>
<dbReference type="OrthoDB" id="9805706at2"/>
<dbReference type="Proteomes" id="UP000002724">
    <property type="component" value="Chromosome"/>
</dbReference>
<dbReference type="GO" id="GO:0005737">
    <property type="term" value="C:cytoplasm"/>
    <property type="evidence" value="ECO:0007669"/>
    <property type="project" value="UniProtKB-ARBA"/>
</dbReference>
<dbReference type="GO" id="GO:0000428">
    <property type="term" value="C:DNA-directed RNA polymerase complex"/>
    <property type="evidence" value="ECO:0007669"/>
    <property type="project" value="UniProtKB-KW"/>
</dbReference>
<dbReference type="GO" id="GO:0003677">
    <property type="term" value="F:DNA binding"/>
    <property type="evidence" value="ECO:0007669"/>
    <property type="project" value="UniProtKB-UniRule"/>
</dbReference>
<dbReference type="GO" id="GO:0003899">
    <property type="term" value="F:DNA-directed RNA polymerase activity"/>
    <property type="evidence" value="ECO:0007669"/>
    <property type="project" value="UniProtKB-UniRule"/>
</dbReference>
<dbReference type="GO" id="GO:0046983">
    <property type="term" value="F:protein dimerization activity"/>
    <property type="evidence" value="ECO:0007669"/>
    <property type="project" value="InterPro"/>
</dbReference>
<dbReference type="GO" id="GO:0006351">
    <property type="term" value="P:DNA-templated transcription"/>
    <property type="evidence" value="ECO:0007669"/>
    <property type="project" value="UniProtKB-UniRule"/>
</dbReference>
<dbReference type="CDD" id="cd06928">
    <property type="entry name" value="RNAP_alpha_NTD"/>
    <property type="match status" value="1"/>
</dbReference>
<dbReference type="FunFam" id="2.170.120.12:FF:000001">
    <property type="entry name" value="DNA-directed RNA polymerase subunit alpha"/>
    <property type="match status" value="1"/>
</dbReference>
<dbReference type="Gene3D" id="1.10.150.20">
    <property type="entry name" value="5' to 3' exonuclease, C-terminal subdomain"/>
    <property type="match status" value="1"/>
</dbReference>
<dbReference type="Gene3D" id="2.170.120.12">
    <property type="entry name" value="DNA-directed RNA polymerase, insert domain"/>
    <property type="match status" value="1"/>
</dbReference>
<dbReference type="Gene3D" id="3.30.1360.10">
    <property type="entry name" value="RNA polymerase, RBP11-like subunit"/>
    <property type="match status" value="1"/>
</dbReference>
<dbReference type="HAMAP" id="MF_00059">
    <property type="entry name" value="RNApol_bact_RpoA"/>
    <property type="match status" value="1"/>
</dbReference>
<dbReference type="InterPro" id="IPR011262">
    <property type="entry name" value="DNA-dir_RNA_pol_insert"/>
</dbReference>
<dbReference type="InterPro" id="IPR011263">
    <property type="entry name" value="DNA-dir_RNA_pol_RpoA/D/Rpb3"/>
</dbReference>
<dbReference type="InterPro" id="IPR011773">
    <property type="entry name" value="DNA-dir_RpoA"/>
</dbReference>
<dbReference type="InterPro" id="IPR036603">
    <property type="entry name" value="RBP11-like"/>
</dbReference>
<dbReference type="InterPro" id="IPR011260">
    <property type="entry name" value="RNAP_asu_C"/>
</dbReference>
<dbReference type="InterPro" id="IPR036643">
    <property type="entry name" value="RNApol_insert_sf"/>
</dbReference>
<dbReference type="NCBIfam" id="NF003513">
    <property type="entry name" value="PRK05182.1-2"/>
    <property type="match status" value="1"/>
</dbReference>
<dbReference type="NCBIfam" id="NF003519">
    <property type="entry name" value="PRK05182.2-5"/>
    <property type="match status" value="1"/>
</dbReference>
<dbReference type="NCBIfam" id="TIGR02027">
    <property type="entry name" value="rpoA"/>
    <property type="match status" value="1"/>
</dbReference>
<dbReference type="Pfam" id="PF01000">
    <property type="entry name" value="RNA_pol_A_bac"/>
    <property type="match status" value="1"/>
</dbReference>
<dbReference type="Pfam" id="PF03118">
    <property type="entry name" value="RNA_pol_A_CTD"/>
    <property type="match status" value="1"/>
</dbReference>
<dbReference type="Pfam" id="PF01193">
    <property type="entry name" value="RNA_pol_L"/>
    <property type="match status" value="1"/>
</dbReference>
<dbReference type="SMART" id="SM00662">
    <property type="entry name" value="RPOLD"/>
    <property type="match status" value="1"/>
</dbReference>
<dbReference type="SUPFAM" id="SSF47789">
    <property type="entry name" value="C-terminal domain of RNA polymerase alpha subunit"/>
    <property type="match status" value="1"/>
</dbReference>
<dbReference type="SUPFAM" id="SSF56553">
    <property type="entry name" value="Insert subdomain of RNA polymerase alpha subunit"/>
    <property type="match status" value="1"/>
</dbReference>
<dbReference type="SUPFAM" id="SSF55257">
    <property type="entry name" value="RBP11-like subunits of RNA polymerase"/>
    <property type="match status" value="1"/>
</dbReference>
<proteinExistence type="inferred from homology"/>
<reference key="1">
    <citation type="submission" date="2008-06" db="EMBL/GenBank/DDBJ databases">
        <title>Complete sequence of Pelodictyon phaeoclathratiforme BU-1.</title>
        <authorList>
            <consortium name="US DOE Joint Genome Institute"/>
            <person name="Lucas S."/>
            <person name="Copeland A."/>
            <person name="Lapidus A."/>
            <person name="Glavina del Rio T."/>
            <person name="Dalin E."/>
            <person name="Tice H."/>
            <person name="Bruce D."/>
            <person name="Goodwin L."/>
            <person name="Pitluck S."/>
            <person name="Schmutz J."/>
            <person name="Larimer F."/>
            <person name="Land M."/>
            <person name="Hauser L."/>
            <person name="Kyrpides N."/>
            <person name="Mikhailova N."/>
            <person name="Liu Z."/>
            <person name="Li T."/>
            <person name="Zhao F."/>
            <person name="Overmann J."/>
            <person name="Bryant D.A."/>
            <person name="Richardson P."/>
        </authorList>
    </citation>
    <scope>NUCLEOTIDE SEQUENCE [LARGE SCALE GENOMIC DNA]</scope>
    <source>
        <strain>DSM 5477 / BU-1</strain>
    </source>
</reference>